<comment type="function">
    <text evidence="1">Presumably involved in the processing and regular turnover of intracellular proteins. Catalyzes the removal of unsubstituted N-terminal amino acids from various peptides.</text>
</comment>
<comment type="catalytic activity">
    <reaction evidence="1">
        <text>Release of an N-terminal amino acid, Xaa-|-Yaa-, in which Xaa is preferably Leu, but may be other amino acids including Pro although not Arg or Lys, and Yaa may be Pro. Amino acid amides and methyl esters are also readily hydrolyzed, but rates on arylamides are exceedingly low.</text>
        <dbReference type="EC" id="3.4.11.1"/>
    </reaction>
</comment>
<comment type="catalytic activity">
    <reaction evidence="1">
        <text>Release of an N-terminal amino acid, preferentially leucine, but not glutamic or aspartic acids.</text>
        <dbReference type="EC" id="3.4.11.10"/>
    </reaction>
</comment>
<comment type="cofactor">
    <cofactor evidence="1">
        <name>Mn(2+)</name>
        <dbReference type="ChEBI" id="CHEBI:29035"/>
    </cofactor>
    <text evidence="1">Binds 2 manganese ions per subunit.</text>
</comment>
<comment type="subcellular location">
    <subcellularLocation>
        <location evidence="1">Cytoplasm</location>
    </subcellularLocation>
</comment>
<comment type="similarity">
    <text evidence="1">Belongs to the peptidase M17 family.</text>
</comment>
<proteinExistence type="inferred from homology"/>
<accession>Q816E3</accession>
<reference key="1">
    <citation type="journal article" date="2003" name="Nature">
        <title>Genome sequence of Bacillus cereus and comparative analysis with Bacillus anthracis.</title>
        <authorList>
            <person name="Ivanova N."/>
            <person name="Sorokin A."/>
            <person name="Anderson I."/>
            <person name="Galleron N."/>
            <person name="Candelon B."/>
            <person name="Kapatral V."/>
            <person name="Bhattacharyya A."/>
            <person name="Reznik G."/>
            <person name="Mikhailova N."/>
            <person name="Lapidus A."/>
            <person name="Chu L."/>
            <person name="Mazur M."/>
            <person name="Goltsman E."/>
            <person name="Larsen N."/>
            <person name="D'Souza M."/>
            <person name="Walunas T."/>
            <person name="Grechkin Y."/>
            <person name="Pusch G."/>
            <person name="Haselkorn R."/>
            <person name="Fonstein M."/>
            <person name="Ehrlich S.D."/>
            <person name="Overbeek R."/>
            <person name="Kyrpides N.C."/>
        </authorList>
    </citation>
    <scope>NUCLEOTIDE SEQUENCE [LARGE SCALE GENOMIC DNA]</scope>
    <source>
        <strain>ATCC 14579 / DSM 31 / CCUG 7414 / JCM 2152 / NBRC 15305 / NCIMB 9373 / NCTC 2599 / NRRL B-3711</strain>
    </source>
</reference>
<evidence type="ECO:0000255" key="1">
    <source>
        <dbReference type="HAMAP-Rule" id="MF_00181"/>
    </source>
</evidence>
<feature type="chain" id="PRO_0000165720" description="Probable cytosol aminopeptidase">
    <location>
        <begin position="1"/>
        <end position="494"/>
    </location>
</feature>
<feature type="active site" evidence="1">
    <location>
        <position position="272"/>
    </location>
</feature>
<feature type="active site" evidence="1">
    <location>
        <position position="346"/>
    </location>
</feature>
<feature type="binding site" evidence="1">
    <location>
        <position position="260"/>
    </location>
    <ligand>
        <name>Mn(2+)</name>
        <dbReference type="ChEBI" id="CHEBI:29035"/>
        <label>2</label>
    </ligand>
</feature>
<feature type="binding site" evidence="1">
    <location>
        <position position="265"/>
    </location>
    <ligand>
        <name>Mn(2+)</name>
        <dbReference type="ChEBI" id="CHEBI:29035"/>
        <label>1</label>
    </ligand>
</feature>
<feature type="binding site" evidence="1">
    <location>
        <position position="265"/>
    </location>
    <ligand>
        <name>Mn(2+)</name>
        <dbReference type="ChEBI" id="CHEBI:29035"/>
        <label>2</label>
    </ligand>
</feature>
<feature type="binding site" evidence="1">
    <location>
        <position position="283"/>
    </location>
    <ligand>
        <name>Mn(2+)</name>
        <dbReference type="ChEBI" id="CHEBI:29035"/>
        <label>2</label>
    </ligand>
</feature>
<feature type="binding site" evidence="1">
    <location>
        <position position="342"/>
    </location>
    <ligand>
        <name>Mn(2+)</name>
        <dbReference type="ChEBI" id="CHEBI:29035"/>
        <label>1</label>
    </ligand>
</feature>
<feature type="binding site" evidence="1">
    <location>
        <position position="344"/>
    </location>
    <ligand>
        <name>Mn(2+)</name>
        <dbReference type="ChEBI" id="CHEBI:29035"/>
        <label>1</label>
    </ligand>
</feature>
<feature type="binding site" evidence="1">
    <location>
        <position position="344"/>
    </location>
    <ligand>
        <name>Mn(2+)</name>
        <dbReference type="ChEBI" id="CHEBI:29035"/>
        <label>2</label>
    </ligand>
</feature>
<keyword id="KW-0031">Aminopeptidase</keyword>
<keyword id="KW-0963">Cytoplasm</keyword>
<keyword id="KW-0378">Hydrolase</keyword>
<keyword id="KW-0464">Manganese</keyword>
<keyword id="KW-0479">Metal-binding</keyword>
<keyword id="KW-0645">Protease</keyword>
<keyword id="KW-1185">Reference proteome</keyword>
<sequence>MFQVQKELAGHEAVIVALFEEEKMSSFVQELDKAFEGQLQVLLEEKELSTKKKAISKVHSLGKTNVKRYYFVGLGKKESYTTETLRAALGKAFKTLQAAKVQDAAILLDSFVTEKLDAIDVAHIAAEVQGLGTYELQTYKSDKKDRVELEKFMAITSEDAQEIEAALTVGYVHGRATNSARTLVNMPPNVLTATKLAEYAVELAEKYDMDYKVLEKEEMEDLGMGALLAVNQGSVEPPKMIALIYKGKEEWKDVIGFVGKGITYDTGGYSLKPREGMVGMKGDMGGAAAVLGAMEIIGELRPEQNVIAVIPSTDNVVSGTAFKPDDVITSMSGKTIEVLNTDAEGRLALADGITYAKKLGANYLVDVATLTGGVIVALGNYTTGAMTNNEELFEQVLEASMETDEPIWQLPIFDRDKERVRNSKFADLNNSPGREGHAVMAGTFLGEFAEDTPWVHLDIAGTSETKGAHDLGPAGATGAMVRTLATLVERFGEE</sequence>
<name>AMPA_BACCR</name>
<dbReference type="EC" id="3.4.11.1" evidence="1"/>
<dbReference type="EC" id="3.4.11.10" evidence="1"/>
<dbReference type="EMBL" id="AE016877">
    <property type="protein sequence ID" value="AAP11794.1"/>
    <property type="molecule type" value="Genomic_DNA"/>
</dbReference>
<dbReference type="RefSeq" id="NP_834593.1">
    <property type="nucleotide sequence ID" value="NC_004722.1"/>
</dbReference>
<dbReference type="RefSeq" id="WP_000487943.1">
    <property type="nucleotide sequence ID" value="NC_004722.1"/>
</dbReference>
<dbReference type="SMR" id="Q816E3"/>
<dbReference type="STRING" id="226900.BC_4921"/>
<dbReference type="MEROPS" id="M17.010"/>
<dbReference type="KEGG" id="bce:BC4921"/>
<dbReference type="PATRIC" id="fig|226900.8.peg.5073"/>
<dbReference type="HOGENOM" id="CLU_013734_6_3_9"/>
<dbReference type="OrthoDB" id="9809354at2"/>
<dbReference type="Proteomes" id="UP000001417">
    <property type="component" value="Chromosome"/>
</dbReference>
<dbReference type="GO" id="GO:0005737">
    <property type="term" value="C:cytoplasm"/>
    <property type="evidence" value="ECO:0000318"/>
    <property type="project" value="GO_Central"/>
</dbReference>
<dbReference type="GO" id="GO:0030145">
    <property type="term" value="F:manganese ion binding"/>
    <property type="evidence" value="ECO:0007669"/>
    <property type="project" value="UniProtKB-UniRule"/>
</dbReference>
<dbReference type="GO" id="GO:0070006">
    <property type="term" value="F:metalloaminopeptidase activity"/>
    <property type="evidence" value="ECO:0007669"/>
    <property type="project" value="InterPro"/>
</dbReference>
<dbReference type="GO" id="GO:0008233">
    <property type="term" value="F:peptidase activity"/>
    <property type="evidence" value="ECO:0000318"/>
    <property type="project" value="GO_Central"/>
</dbReference>
<dbReference type="GO" id="GO:0006508">
    <property type="term" value="P:proteolysis"/>
    <property type="evidence" value="ECO:0000318"/>
    <property type="project" value="GO_Central"/>
</dbReference>
<dbReference type="CDD" id="cd00433">
    <property type="entry name" value="Peptidase_M17"/>
    <property type="match status" value="1"/>
</dbReference>
<dbReference type="Gene3D" id="3.40.220.10">
    <property type="entry name" value="Leucine Aminopeptidase, subunit E, domain 1"/>
    <property type="match status" value="1"/>
</dbReference>
<dbReference type="Gene3D" id="3.40.630.10">
    <property type="entry name" value="Zn peptidases"/>
    <property type="match status" value="1"/>
</dbReference>
<dbReference type="HAMAP" id="MF_00181">
    <property type="entry name" value="Cytosol_peptidase_M17"/>
    <property type="match status" value="1"/>
</dbReference>
<dbReference type="InterPro" id="IPR011356">
    <property type="entry name" value="Leucine_aapep/pepB"/>
</dbReference>
<dbReference type="InterPro" id="IPR043472">
    <property type="entry name" value="Macro_dom-like"/>
</dbReference>
<dbReference type="InterPro" id="IPR000819">
    <property type="entry name" value="Peptidase_M17_C"/>
</dbReference>
<dbReference type="InterPro" id="IPR023042">
    <property type="entry name" value="Peptidase_M17_leu_NH2_pept"/>
</dbReference>
<dbReference type="InterPro" id="IPR008283">
    <property type="entry name" value="Peptidase_M17_N"/>
</dbReference>
<dbReference type="NCBIfam" id="NF002073">
    <property type="entry name" value="PRK00913.1-2"/>
    <property type="match status" value="1"/>
</dbReference>
<dbReference type="NCBIfam" id="NF002074">
    <property type="entry name" value="PRK00913.1-4"/>
    <property type="match status" value="1"/>
</dbReference>
<dbReference type="NCBIfam" id="NF002083">
    <property type="entry name" value="PRK00913.3-5"/>
    <property type="match status" value="1"/>
</dbReference>
<dbReference type="PANTHER" id="PTHR11963:SF23">
    <property type="entry name" value="CYTOSOL AMINOPEPTIDASE"/>
    <property type="match status" value="1"/>
</dbReference>
<dbReference type="PANTHER" id="PTHR11963">
    <property type="entry name" value="LEUCINE AMINOPEPTIDASE-RELATED"/>
    <property type="match status" value="1"/>
</dbReference>
<dbReference type="Pfam" id="PF00883">
    <property type="entry name" value="Peptidase_M17"/>
    <property type="match status" value="1"/>
</dbReference>
<dbReference type="Pfam" id="PF02789">
    <property type="entry name" value="Peptidase_M17_N"/>
    <property type="match status" value="1"/>
</dbReference>
<dbReference type="PRINTS" id="PR00481">
    <property type="entry name" value="LAMNOPPTDASE"/>
</dbReference>
<dbReference type="SUPFAM" id="SSF52949">
    <property type="entry name" value="Macro domain-like"/>
    <property type="match status" value="1"/>
</dbReference>
<dbReference type="SUPFAM" id="SSF53187">
    <property type="entry name" value="Zn-dependent exopeptidases"/>
    <property type="match status" value="1"/>
</dbReference>
<dbReference type="PROSITE" id="PS00631">
    <property type="entry name" value="CYTOSOL_AP"/>
    <property type="match status" value="1"/>
</dbReference>
<gene>
    <name evidence="1" type="primary">pepA</name>
    <name type="ordered locus">BC_4921</name>
</gene>
<protein>
    <recommendedName>
        <fullName evidence="1">Probable cytosol aminopeptidase</fullName>
        <ecNumber evidence="1">3.4.11.1</ecNumber>
    </recommendedName>
    <alternativeName>
        <fullName evidence="1">Leucine aminopeptidase</fullName>
        <shortName evidence="1">LAP</shortName>
        <ecNumber evidence="1">3.4.11.10</ecNumber>
    </alternativeName>
    <alternativeName>
        <fullName evidence="1">Leucyl aminopeptidase</fullName>
    </alternativeName>
</protein>
<organism>
    <name type="scientific">Bacillus cereus (strain ATCC 14579 / DSM 31 / CCUG 7414 / JCM 2152 / NBRC 15305 / NCIMB 9373 / NCTC 2599 / NRRL B-3711)</name>
    <dbReference type="NCBI Taxonomy" id="226900"/>
    <lineage>
        <taxon>Bacteria</taxon>
        <taxon>Bacillati</taxon>
        <taxon>Bacillota</taxon>
        <taxon>Bacilli</taxon>
        <taxon>Bacillales</taxon>
        <taxon>Bacillaceae</taxon>
        <taxon>Bacillus</taxon>
        <taxon>Bacillus cereus group</taxon>
    </lineage>
</organism>